<gene>
    <name evidence="1" type="primary">lig</name>
    <name type="ordered locus">YG5714_2067</name>
</gene>
<proteinExistence type="inferred from homology"/>
<feature type="chain" id="PRO_1000205960" description="DNA ligase">
    <location>
        <begin position="1"/>
        <end position="601"/>
    </location>
</feature>
<feature type="region of interest" description="Disordered" evidence="2">
    <location>
        <begin position="568"/>
        <end position="601"/>
    </location>
</feature>
<feature type="active site" description="N6-AMP-lysine intermediate" evidence="1">
    <location>
        <position position="260"/>
    </location>
</feature>
<feature type="binding site" evidence="1">
    <location>
        <position position="258"/>
    </location>
    <ligand>
        <name>ATP</name>
        <dbReference type="ChEBI" id="CHEBI:30616"/>
    </ligand>
</feature>
<feature type="binding site" evidence="1">
    <location>
        <position position="265"/>
    </location>
    <ligand>
        <name>ATP</name>
        <dbReference type="ChEBI" id="CHEBI:30616"/>
    </ligand>
</feature>
<feature type="binding site" evidence="1">
    <location>
        <position position="280"/>
    </location>
    <ligand>
        <name>ATP</name>
        <dbReference type="ChEBI" id="CHEBI:30616"/>
    </ligand>
</feature>
<feature type="binding site" evidence="1">
    <location>
        <position position="310"/>
    </location>
    <ligand>
        <name>ATP</name>
        <dbReference type="ChEBI" id="CHEBI:30616"/>
    </ligand>
</feature>
<feature type="binding site" evidence="1">
    <location>
        <position position="350"/>
    </location>
    <ligand>
        <name>ATP</name>
        <dbReference type="ChEBI" id="CHEBI:30616"/>
    </ligand>
</feature>
<feature type="binding site" evidence="1">
    <location>
        <position position="427"/>
    </location>
    <ligand>
        <name>ATP</name>
        <dbReference type="ChEBI" id="CHEBI:30616"/>
    </ligand>
</feature>
<feature type="binding site" evidence="1">
    <location>
        <position position="433"/>
    </location>
    <ligand>
        <name>ATP</name>
        <dbReference type="ChEBI" id="CHEBI:30616"/>
    </ligand>
</feature>
<name>DNLI_SACI7</name>
<protein>
    <recommendedName>
        <fullName evidence="1">DNA ligase</fullName>
        <ecNumber evidence="1">6.5.1.1</ecNumber>
    </recommendedName>
    <alternativeName>
        <fullName evidence="1">Polydeoxyribonucleotide synthase [ATP]</fullName>
    </alternativeName>
</protein>
<comment type="function">
    <text evidence="1">DNA ligase that seals nicks in double-stranded DNA during DNA replication, DNA recombination and DNA repair.</text>
</comment>
<comment type="catalytic activity">
    <reaction evidence="1">
        <text>ATP + (deoxyribonucleotide)n-3'-hydroxyl + 5'-phospho-(deoxyribonucleotide)m = (deoxyribonucleotide)n+m + AMP + diphosphate.</text>
        <dbReference type="EC" id="6.5.1.1"/>
    </reaction>
</comment>
<comment type="cofactor">
    <cofactor evidence="1">
        <name>Mg(2+)</name>
        <dbReference type="ChEBI" id="CHEBI:18420"/>
    </cofactor>
</comment>
<comment type="similarity">
    <text evidence="1">Belongs to the ATP-dependent DNA ligase family.</text>
</comment>
<organism>
    <name type="scientific">Saccharolobus islandicus (strain Y.G.57.14 / Yellowstone #1)</name>
    <name type="common">Sulfolobus islandicus</name>
    <dbReference type="NCBI Taxonomy" id="439386"/>
    <lineage>
        <taxon>Archaea</taxon>
        <taxon>Thermoproteota</taxon>
        <taxon>Thermoprotei</taxon>
        <taxon>Sulfolobales</taxon>
        <taxon>Sulfolobaceae</taxon>
        <taxon>Saccharolobus</taxon>
    </lineage>
</organism>
<reference key="1">
    <citation type="journal article" date="2009" name="Proc. Natl. Acad. Sci. U.S.A.">
        <title>Biogeography of the Sulfolobus islandicus pan-genome.</title>
        <authorList>
            <person name="Reno M.L."/>
            <person name="Held N.L."/>
            <person name="Fields C.J."/>
            <person name="Burke P.V."/>
            <person name="Whitaker R.J."/>
        </authorList>
    </citation>
    <scope>NUCLEOTIDE SEQUENCE [LARGE SCALE GENOMIC DNA]</scope>
    <source>
        <strain>Y.G.57.14 / Yellowstone #1</strain>
    </source>
</reference>
<keyword id="KW-0067">ATP-binding</keyword>
<keyword id="KW-0131">Cell cycle</keyword>
<keyword id="KW-0132">Cell division</keyword>
<keyword id="KW-0227">DNA damage</keyword>
<keyword id="KW-0233">DNA recombination</keyword>
<keyword id="KW-0234">DNA repair</keyword>
<keyword id="KW-0235">DNA replication</keyword>
<keyword id="KW-0436">Ligase</keyword>
<keyword id="KW-0460">Magnesium</keyword>
<keyword id="KW-0479">Metal-binding</keyword>
<keyword id="KW-0547">Nucleotide-binding</keyword>
<dbReference type="EC" id="6.5.1.1" evidence="1"/>
<dbReference type="EMBL" id="CP001403">
    <property type="protein sequence ID" value="ACP46321.1"/>
    <property type="molecule type" value="Genomic_DNA"/>
</dbReference>
<dbReference type="RefSeq" id="WP_012716463.1">
    <property type="nucleotide sequence ID" value="NC_012622.1"/>
</dbReference>
<dbReference type="SMR" id="C3N834"/>
<dbReference type="GeneID" id="7805625"/>
<dbReference type="KEGG" id="siy:YG5714_2067"/>
<dbReference type="HOGENOM" id="CLU_005138_6_0_2"/>
<dbReference type="Proteomes" id="UP000002308">
    <property type="component" value="Chromosome"/>
</dbReference>
<dbReference type="GO" id="GO:0005524">
    <property type="term" value="F:ATP binding"/>
    <property type="evidence" value="ECO:0007669"/>
    <property type="project" value="UniProtKB-UniRule"/>
</dbReference>
<dbReference type="GO" id="GO:0003677">
    <property type="term" value="F:DNA binding"/>
    <property type="evidence" value="ECO:0007669"/>
    <property type="project" value="InterPro"/>
</dbReference>
<dbReference type="GO" id="GO:0003910">
    <property type="term" value="F:DNA ligase (ATP) activity"/>
    <property type="evidence" value="ECO:0007669"/>
    <property type="project" value="UniProtKB-UniRule"/>
</dbReference>
<dbReference type="GO" id="GO:0046872">
    <property type="term" value="F:metal ion binding"/>
    <property type="evidence" value="ECO:0007669"/>
    <property type="project" value="UniProtKB-KW"/>
</dbReference>
<dbReference type="GO" id="GO:0051301">
    <property type="term" value="P:cell division"/>
    <property type="evidence" value="ECO:0007669"/>
    <property type="project" value="UniProtKB-KW"/>
</dbReference>
<dbReference type="GO" id="GO:0071897">
    <property type="term" value="P:DNA biosynthetic process"/>
    <property type="evidence" value="ECO:0007669"/>
    <property type="project" value="InterPro"/>
</dbReference>
<dbReference type="GO" id="GO:0006310">
    <property type="term" value="P:DNA recombination"/>
    <property type="evidence" value="ECO:0007669"/>
    <property type="project" value="UniProtKB-UniRule"/>
</dbReference>
<dbReference type="GO" id="GO:0006281">
    <property type="term" value="P:DNA repair"/>
    <property type="evidence" value="ECO:0007669"/>
    <property type="project" value="UniProtKB-UniRule"/>
</dbReference>
<dbReference type="GO" id="GO:0006273">
    <property type="term" value="P:lagging strand elongation"/>
    <property type="evidence" value="ECO:0007669"/>
    <property type="project" value="TreeGrafter"/>
</dbReference>
<dbReference type="CDD" id="cd07901">
    <property type="entry name" value="Adenylation_DNA_ligase_Arch_LigB"/>
    <property type="match status" value="1"/>
</dbReference>
<dbReference type="CDD" id="cd07969">
    <property type="entry name" value="OBF_DNA_ligase_I"/>
    <property type="match status" value="1"/>
</dbReference>
<dbReference type="FunFam" id="1.10.3260.10:FF:000007">
    <property type="entry name" value="DNA ligase"/>
    <property type="match status" value="1"/>
</dbReference>
<dbReference type="FunFam" id="2.40.50.140:FF:000062">
    <property type="entry name" value="DNA ligase"/>
    <property type="match status" value="1"/>
</dbReference>
<dbReference type="FunFam" id="3.30.470.30:FF:000012">
    <property type="entry name" value="Probable DNA ligase"/>
    <property type="match status" value="1"/>
</dbReference>
<dbReference type="Gene3D" id="1.10.3260.10">
    <property type="entry name" value="DNA ligase, ATP-dependent, N-terminal domain"/>
    <property type="match status" value="1"/>
</dbReference>
<dbReference type="Gene3D" id="3.30.470.30">
    <property type="entry name" value="DNA ligase/mRNA capping enzyme"/>
    <property type="match status" value="1"/>
</dbReference>
<dbReference type="Gene3D" id="2.40.50.140">
    <property type="entry name" value="Nucleic acid-binding proteins"/>
    <property type="match status" value="1"/>
</dbReference>
<dbReference type="HAMAP" id="MF_00407">
    <property type="entry name" value="DNA_ligase"/>
    <property type="match status" value="1"/>
</dbReference>
<dbReference type="InterPro" id="IPR050191">
    <property type="entry name" value="ATP-dep_DNA_ligase"/>
</dbReference>
<dbReference type="InterPro" id="IPR022865">
    <property type="entry name" value="DNA_ligae_ATP-dep_bac/arc"/>
</dbReference>
<dbReference type="InterPro" id="IPR000977">
    <property type="entry name" value="DNA_ligase_ATP-dep"/>
</dbReference>
<dbReference type="InterPro" id="IPR012309">
    <property type="entry name" value="DNA_ligase_ATP-dep_C"/>
</dbReference>
<dbReference type="InterPro" id="IPR012310">
    <property type="entry name" value="DNA_ligase_ATP-dep_cent"/>
</dbReference>
<dbReference type="InterPro" id="IPR016059">
    <property type="entry name" value="DNA_ligase_ATP-dep_CS"/>
</dbReference>
<dbReference type="InterPro" id="IPR012308">
    <property type="entry name" value="DNA_ligase_ATP-dep_N"/>
</dbReference>
<dbReference type="InterPro" id="IPR036599">
    <property type="entry name" value="DNA_ligase_N_sf"/>
</dbReference>
<dbReference type="InterPro" id="IPR012340">
    <property type="entry name" value="NA-bd_OB-fold"/>
</dbReference>
<dbReference type="NCBIfam" id="TIGR00574">
    <property type="entry name" value="dnl1"/>
    <property type="match status" value="1"/>
</dbReference>
<dbReference type="PANTHER" id="PTHR45674:SF4">
    <property type="entry name" value="DNA LIGASE 1"/>
    <property type="match status" value="1"/>
</dbReference>
<dbReference type="PANTHER" id="PTHR45674">
    <property type="entry name" value="DNA LIGASE 1/3 FAMILY MEMBER"/>
    <property type="match status" value="1"/>
</dbReference>
<dbReference type="Pfam" id="PF04679">
    <property type="entry name" value="DNA_ligase_A_C"/>
    <property type="match status" value="1"/>
</dbReference>
<dbReference type="Pfam" id="PF01068">
    <property type="entry name" value="DNA_ligase_A_M"/>
    <property type="match status" value="1"/>
</dbReference>
<dbReference type="Pfam" id="PF04675">
    <property type="entry name" value="DNA_ligase_A_N"/>
    <property type="match status" value="1"/>
</dbReference>
<dbReference type="SUPFAM" id="SSF117018">
    <property type="entry name" value="ATP-dependent DNA ligase DNA-binding domain"/>
    <property type="match status" value="1"/>
</dbReference>
<dbReference type="SUPFAM" id="SSF56091">
    <property type="entry name" value="DNA ligase/mRNA capping enzyme, catalytic domain"/>
    <property type="match status" value="1"/>
</dbReference>
<dbReference type="SUPFAM" id="SSF50249">
    <property type="entry name" value="Nucleic acid-binding proteins"/>
    <property type="match status" value="1"/>
</dbReference>
<dbReference type="PROSITE" id="PS00697">
    <property type="entry name" value="DNA_LIGASE_A1"/>
    <property type="match status" value="1"/>
</dbReference>
<dbReference type="PROSITE" id="PS00333">
    <property type="entry name" value="DNA_LIGASE_A2"/>
    <property type="match status" value="1"/>
</dbReference>
<dbReference type="PROSITE" id="PS50160">
    <property type="entry name" value="DNA_LIGASE_A3"/>
    <property type="match status" value="1"/>
</dbReference>
<evidence type="ECO:0000255" key="1">
    <source>
        <dbReference type="HAMAP-Rule" id="MF_00407"/>
    </source>
</evidence>
<evidence type="ECO:0000256" key="2">
    <source>
        <dbReference type="SAM" id="MobiDB-lite"/>
    </source>
</evidence>
<sequence length="601" mass="67730">MEFKVIAEYFDKLEKISSRLQLTALLADLLSKSDKAIIDKVVYIIQGKLWPDFLGYPELGIGEKFLIKAISIATNTDENSVENLYKSIGDLGEVARRLKSKQQSTGILGFLGTSSKESLKVDEVYSTLSKVALTTGEGSRDLKIRLLAGLLKKADPLEAKFLVRFVEGRLRVGIGDATVLDAMAIAFGGGQSASEIVERAYNLRADLGNIAKIIVEKGIEALKTLKPEVGIPIRPMLAERLSNPEEILKKVGGSALVDYKYDGERAQIHKKDDKIFIFSRRLENITSQYPDVVEYISKYTEGKEFIIEGEIVAVDPESGEMRSFQELMHRKRKSDIYEAIKEYPVNVFLFDLMYYEDVDYTTKPLEVRRKLLESIVKPNDYVKIAHHIQVNNIEDLKSFFYRAISEGGEGVMVKAIGKDAIYQAGARGWLWIKLKRDYQSEMADTVDLVVVGGFYGKGKRGGKISSLLMAAYNPKTDTFESVCKVASGFSDEQLDELQKKLMEIKRDIKHPRVNSKMEPDIWVEPVYVAEIIGAEITISPLHTCCQDVVEKDAGLSIRFPRFIRWRDDKSPEDATTTDEILEMYNKQPKKKIESPPIDESV</sequence>
<accession>C3N834</accession>